<name>GMT_PHANO</name>
<comment type="function">
    <text evidence="1">Involved in the import of GDP-mannose from the cytoplasm into the Golgi lumen.</text>
</comment>
<comment type="subunit">
    <text evidence="1">Homooligomer.</text>
</comment>
<comment type="subcellular location">
    <subcellularLocation>
        <location evidence="1">Golgi apparatus membrane</location>
        <topology evidence="1">Multi-pass membrane protein</topology>
    </subcellularLocation>
    <subcellularLocation>
        <location evidence="1">Cytoplasmic vesicle membrane</location>
        <topology evidence="1">Multi-pass membrane protein</topology>
    </subcellularLocation>
    <subcellularLocation>
        <location evidence="1">Endoplasmic reticulum membrane</location>
        <topology evidence="1">Multi-pass membrane protein</topology>
    </subcellularLocation>
</comment>
<comment type="similarity">
    <text evidence="4">Belongs to the TPT transporter family. SLC35D subfamily.</text>
</comment>
<sequence length="381" mass="41826">MSDDKKSDDYRVDMPSSRTSRAPSPIMRPALKSAPSLTENPMAAVLAYCASSILMTVTNKYVLSGVDFNLNFFLLCVQSVVCVTAISICKAAGLITYRDFNTDEAKKWFPISLLLIGMIYTGTWALKYLSIPVYTIFKNLTIILIAYGEVLWFGGSVTPMTLFSFGLMVLSSIIAAWADIQHALNSFGQQSEAANEALSTMHAGYLWMAFNCVCSATYLLSMRKRIKLTNFKDYDTMYYNNLLTIPILLVASILVEDWSSANIQKNFPPEQRNTVIMVMVISGMSTVFISYTSAWAVRVTSSTTYSMVGALNKLPIAISGLVFFDAPVTFGSVSAIFVGFVSGIVYAVAKVRQNSKPKTVLPTTNIPLSASSRSMQDSLKA</sequence>
<reference key="1">
    <citation type="journal article" date="2007" name="Plant Cell">
        <title>Dothideomycete-plant interactions illuminated by genome sequencing and EST analysis of the wheat pathogen Stagonospora nodorum.</title>
        <authorList>
            <person name="Hane J.K."/>
            <person name="Lowe R.G.T."/>
            <person name="Solomon P.S."/>
            <person name="Tan K.-C."/>
            <person name="Schoch C.L."/>
            <person name="Spatafora J.W."/>
            <person name="Crous P.W."/>
            <person name="Kodira C.D."/>
            <person name="Birren B.W."/>
            <person name="Galagan J.E."/>
            <person name="Torriani S.F.F."/>
            <person name="McDonald B.A."/>
            <person name="Oliver R.P."/>
        </authorList>
    </citation>
    <scope>NUCLEOTIDE SEQUENCE [LARGE SCALE GENOMIC DNA]</scope>
    <source>
        <strain>SN15 / ATCC MYA-4574 / FGSC 10173</strain>
    </source>
</reference>
<organism>
    <name type="scientific">Phaeosphaeria nodorum (strain SN15 / ATCC MYA-4574 / FGSC 10173)</name>
    <name type="common">Glume blotch fungus</name>
    <name type="synonym">Parastagonospora nodorum</name>
    <dbReference type="NCBI Taxonomy" id="321614"/>
    <lineage>
        <taxon>Eukaryota</taxon>
        <taxon>Fungi</taxon>
        <taxon>Dikarya</taxon>
        <taxon>Ascomycota</taxon>
        <taxon>Pezizomycotina</taxon>
        <taxon>Dothideomycetes</taxon>
        <taxon>Pleosporomycetidae</taxon>
        <taxon>Pleosporales</taxon>
        <taxon>Pleosporineae</taxon>
        <taxon>Phaeosphaeriaceae</taxon>
        <taxon>Parastagonospora</taxon>
    </lineage>
</organism>
<keyword id="KW-0968">Cytoplasmic vesicle</keyword>
<keyword id="KW-0256">Endoplasmic reticulum</keyword>
<keyword id="KW-0333">Golgi apparatus</keyword>
<keyword id="KW-0472">Membrane</keyword>
<keyword id="KW-0762">Sugar transport</keyword>
<keyword id="KW-0812">Transmembrane</keyword>
<keyword id="KW-1133">Transmembrane helix</keyword>
<keyword id="KW-0813">Transport</keyword>
<dbReference type="EMBL" id="CH445338">
    <property type="protein sequence ID" value="EAT83417.1"/>
    <property type="molecule type" value="Genomic_DNA"/>
</dbReference>
<dbReference type="RefSeq" id="XP_001799524.1">
    <property type="nucleotide sequence ID" value="XM_001799472.1"/>
</dbReference>
<dbReference type="SMR" id="Q0UG89"/>
<dbReference type="FunCoup" id="Q0UG89">
    <property type="interactions" value="503"/>
</dbReference>
<dbReference type="STRING" id="321614.Q0UG89"/>
<dbReference type="EnsemblFungi" id="SNOT_09225">
    <property type="protein sequence ID" value="SNOT_09225"/>
    <property type="gene ID" value="SNOG_09225"/>
</dbReference>
<dbReference type="GeneID" id="5976425"/>
<dbReference type="KEGG" id="pno:SNOG_09225"/>
<dbReference type="VEuPathDB" id="FungiDB:JI435_092250"/>
<dbReference type="eggNOG" id="KOG1444">
    <property type="taxonomic scope" value="Eukaryota"/>
</dbReference>
<dbReference type="HOGENOM" id="CLU_025360_1_2_1"/>
<dbReference type="InParanoid" id="Q0UG89"/>
<dbReference type="OMA" id="VWMLINC"/>
<dbReference type="OrthoDB" id="417037at2759"/>
<dbReference type="Proteomes" id="UP000001055">
    <property type="component" value="Unassembled WGS sequence"/>
</dbReference>
<dbReference type="GO" id="GO:0030659">
    <property type="term" value="C:cytoplasmic vesicle membrane"/>
    <property type="evidence" value="ECO:0007669"/>
    <property type="project" value="UniProtKB-SubCell"/>
</dbReference>
<dbReference type="GO" id="GO:0005789">
    <property type="term" value="C:endoplasmic reticulum membrane"/>
    <property type="evidence" value="ECO:0007669"/>
    <property type="project" value="UniProtKB-SubCell"/>
</dbReference>
<dbReference type="GO" id="GO:0005794">
    <property type="term" value="C:Golgi apparatus"/>
    <property type="evidence" value="ECO:0000318"/>
    <property type="project" value="GO_Central"/>
</dbReference>
<dbReference type="GO" id="GO:0000139">
    <property type="term" value="C:Golgi membrane"/>
    <property type="evidence" value="ECO:0007669"/>
    <property type="project" value="UniProtKB-SubCell"/>
</dbReference>
<dbReference type="GO" id="GO:0015297">
    <property type="term" value="F:antiporter activity"/>
    <property type="evidence" value="ECO:0000318"/>
    <property type="project" value="GO_Central"/>
</dbReference>
<dbReference type="GO" id="GO:0005458">
    <property type="term" value="F:GDP-mannose transmembrane transporter activity"/>
    <property type="evidence" value="ECO:0000318"/>
    <property type="project" value="GO_Central"/>
</dbReference>
<dbReference type="GO" id="GO:1990570">
    <property type="term" value="P:GDP-mannose transmembrane transport"/>
    <property type="evidence" value="ECO:0000318"/>
    <property type="project" value="GO_Central"/>
</dbReference>
<dbReference type="InterPro" id="IPR050186">
    <property type="entry name" value="TPT_transporter"/>
</dbReference>
<dbReference type="NCBIfam" id="TIGR00803">
    <property type="entry name" value="nst"/>
    <property type="match status" value="1"/>
</dbReference>
<dbReference type="PANTHER" id="PTHR11132">
    <property type="entry name" value="SOLUTE CARRIER FAMILY 35"/>
    <property type="match status" value="1"/>
</dbReference>
<dbReference type="SUPFAM" id="SSF103481">
    <property type="entry name" value="Multidrug resistance efflux transporter EmrE"/>
    <property type="match status" value="1"/>
</dbReference>
<evidence type="ECO:0000250" key="1"/>
<evidence type="ECO:0000255" key="2"/>
<evidence type="ECO:0000256" key="3">
    <source>
        <dbReference type="SAM" id="MobiDB-lite"/>
    </source>
</evidence>
<evidence type="ECO:0000305" key="4"/>
<protein>
    <recommendedName>
        <fullName>GDP-mannose transporter</fullName>
        <shortName>GMT</shortName>
    </recommendedName>
</protein>
<gene>
    <name type="primary">VRG4</name>
    <name type="ORF">SNOG_09225</name>
</gene>
<accession>Q0UG89</accession>
<feature type="chain" id="PRO_0000333532" description="GDP-mannose transporter">
    <location>
        <begin position="1"/>
        <end position="381"/>
    </location>
</feature>
<feature type="topological domain" description="Cytoplasmic" evidence="1">
    <location>
        <begin position="1"/>
        <end position="36"/>
    </location>
</feature>
<feature type="transmembrane region" description="Helical" evidence="2">
    <location>
        <begin position="37"/>
        <end position="57"/>
    </location>
</feature>
<feature type="topological domain" description="Lumenal" evidence="1">
    <location>
        <begin position="58"/>
        <end position="67"/>
    </location>
</feature>
<feature type="transmembrane region" description="Helical" evidence="2">
    <location>
        <begin position="68"/>
        <end position="88"/>
    </location>
</feature>
<feature type="topological domain" description="Cytoplasmic" evidence="1">
    <location>
        <begin position="89"/>
        <end position="107"/>
    </location>
</feature>
<feature type="transmembrane region" description="Helical" evidence="2">
    <location>
        <begin position="108"/>
        <end position="126"/>
    </location>
</feature>
<feature type="topological domain" description="Lumenal" evidence="1">
    <location>
        <begin position="127"/>
        <end position="130"/>
    </location>
</feature>
<feature type="transmembrane region" description="Helical" evidence="2">
    <location>
        <begin position="131"/>
        <end position="153"/>
    </location>
</feature>
<feature type="topological domain" description="Cytoplasmic" evidence="1">
    <location>
        <begin position="154"/>
        <end position="161"/>
    </location>
</feature>
<feature type="transmembrane region" description="Helical" evidence="2">
    <location>
        <begin position="162"/>
        <end position="184"/>
    </location>
</feature>
<feature type="topological domain" description="Lumenal" evidence="1">
    <location>
        <begin position="185"/>
        <end position="199"/>
    </location>
</feature>
<feature type="transmembrane region" description="Helical" evidence="2">
    <location>
        <begin position="200"/>
        <end position="220"/>
    </location>
</feature>
<feature type="topological domain" description="Cytoplasmic" evidence="1">
    <location>
        <begin position="221"/>
        <end position="242"/>
    </location>
</feature>
<feature type="transmembrane region" description="Helical" evidence="2">
    <location>
        <begin position="243"/>
        <end position="263"/>
    </location>
</feature>
<feature type="topological domain" description="Lumenal" evidence="1">
    <location>
        <begin position="264"/>
        <end position="274"/>
    </location>
</feature>
<feature type="transmembrane region" description="Helical" evidence="2">
    <location>
        <begin position="275"/>
        <end position="295"/>
    </location>
</feature>
<feature type="topological domain" description="Cytoplasmic" evidence="1">
    <location>
        <begin position="296"/>
        <end position="303"/>
    </location>
</feature>
<feature type="transmembrane region" description="Helical" evidence="2">
    <location>
        <begin position="304"/>
        <end position="324"/>
    </location>
</feature>
<feature type="topological domain" description="Lumenal" evidence="1">
    <location>
        <begin position="325"/>
        <end position="327"/>
    </location>
</feature>
<feature type="transmembrane region" description="Helical" evidence="2">
    <location>
        <begin position="328"/>
        <end position="348"/>
    </location>
</feature>
<feature type="topological domain" description="Cytoplasmic" evidence="1">
    <location>
        <begin position="349"/>
        <end position="381"/>
    </location>
</feature>
<feature type="region of interest" description="Disordered" evidence="3">
    <location>
        <begin position="1"/>
        <end position="28"/>
    </location>
</feature>
<feature type="compositionally biased region" description="Basic and acidic residues" evidence="3">
    <location>
        <begin position="1"/>
        <end position="12"/>
    </location>
</feature>
<proteinExistence type="inferred from homology"/>